<sequence>MSSGGLFLLLGLLTLWEVLTPVSSKDRPKFCELPADSGSCKGNFQAFYYHPVHRTCLEFIYGGCEGNDNNFKTIDECKRTCAT</sequence>
<reference key="1">
    <citation type="journal article" date="2012" name="Toxicon">
        <title>Functional characterization of Kunitz-type protease inhibitor Pr-mulgins identified from New Guinean Pseudechis australis.</title>
        <authorList>
            <person name="Inagaki H."/>
            <person name="Kimoto H."/>
            <person name="Yamauchi Y."/>
            <person name="Toriba M."/>
            <person name="Kubo T."/>
        </authorList>
    </citation>
    <scope>NUCLEOTIDE SEQUENCE [MRNA]</scope>
    <scope>FUNCTION</scope>
    <source>
        <tissue>Venom gland</tissue>
    </source>
</reference>
<organism>
    <name type="scientific">Pseudechis rossignolii</name>
    <name type="common">Papuan pigmy mulga snake</name>
    <dbReference type="NCBI Taxonomy" id="1489342"/>
    <lineage>
        <taxon>Eukaryota</taxon>
        <taxon>Metazoa</taxon>
        <taxon>Chordata</taxon>
        <taxon>Craniata</taxon>
        <taxon>Vertebrata</taxon>
        <taxon>Euteleostomi</taxon>
        <taxon>Lepidosauria</taxon>
        <taxon>Squamata</taxon>
        <taxon>Bifurcata</taxon>
        <taxon>Unidentata</taxon>
        <taxon>Episquamata</taxon>
        <taxon>Toxicofera</taxon>
        <taxon>Serpentes</taxon>
        <taxon>Colubroidea</taxon>
        <taxon>Elapidae</taxon>
        <taxon>Hydrophiinae</taxon>
        <taxon>Pseudechis</taxon>
    </lineage>
</organism>
<dbReference type="EMBL" id="AB576156">
    <property type="protein sequence ID" value="BAJ76676.1"/>
    <property type="molecule type" value="mRNA"/>
</dbReference>
<dbReference type="SMR" id="E7FL13"/>
<dbReference type="MEROPS" id="I02.052"/>
<dbReference type="GO" id="GO:0005576">
    <property type="term" value="C:extracellular region"/>
    <property type="evidence" value="ECO:0007669"/>
    <property type="project" value="UniProtKB-SubCell"/>
</dbReference>
<dbReference type="GO" id="GO:0004867">
    <property type="term" value="F:serine-type endopeptidase inhibitor activity"/>
    <property type="evidence" value="ECO:0007669"/>
    <property type="project" value="UniProtKB-KW"/>
</dbReference>
<dbReference type="GO" id="GO:0090729">
    <property type="term" value="F:toxin activity"/>
    <property type="evidence" value="ECO:0007669"/>
    <property type="project" value="UniProtKB-KW"/>
</dbReference>
<dbReference type="CDD" id="cd22594">
    <property type="entry name" value="Kunitz_textilinin-like"/>
    <property type="match status" value="1"/>
</dbReference>
<dbReference type="FunFam" id="4.10.410.10:FF:000021">
    <property type="entry name" value="Serine protease inhibitor, putative"/>
    <property type="match status" value="1"/>
</dbReference>
<dbReference type="Gene3D" id="4.10.410.10">
    <property type="entry name" value="Pancreatic trypsin inhibitor Kunitz domain"/>
    <property type="match status" value="1"/>
</dbReference>
<dbReference type="InterPro" id="IPR002223">
    <property type="entry name" value="Kunitz_BPTI"/>
</dbReference>
<dbReference type="InterPro" id="IPR036880">
    <property type="entry name" value="Kunitz_BPTI_sf"/>
</dbReference>
<dbReference type="InterPro" id="IPR020901">
    <property type="entry name" value="Prtase_inh_Kunz-CS"/>
</dbReference>
<dbReference type="InterPro" id="IPR050098">
    <property type="entry name" value="TFPI/VKTCI-like"/>
</dbReference>
<dbReference type="PANTHER" id="PTHR10083">
    <property type="entry name" value="KUNITZ-TYPE PROTEASE INHIBITOR-RELATED"/>
    <property type="match status" value="1"/>
</dbReference>
<dbReference type="Pfam" id="PF00014">
    <property type="entry name" value="Kunitz_BPTI"/>
    <property type="match status" value="1"/>
</dbReference>
<dbReference type="PRINTS" id="PR00759">
    <property type="entry name" value="BASICPTASE"/>
</dbReference>
<dbReference type="SMART" id="SM00131">
    <property type="entry name" value="KU"/>
    <property type="match status" value="1"/>
</dbReference>
<dbReference type="SUPFAM" id="SSF57362">
    <property type="entry name" value="BPTI-like"/>
    <property type="match status" value="1"/>
</dbReference>
<dbReference type="PROSITE" id="PS00280">
    <property type="entry name" value="BPTI_KUNITZ_1"/>
    <property type="match status" value="1"/>
</dbReference>
<dbReference type="PROSITE" id="PS50279">
    <property type="entry name" value="BPTI_KUNITZ_2"/>
    <property type="match status" value="1"/>
</dbReference>
<name>VKT3_PSERS</name>
<proteinExistence type="evidence at transcript level"/>
<feature type="signal peptide" evidence="2">
    <location>
        <begin position="1"/>
        <end position="24"/>
    </location>
</feature>
<feature type="chain" id="PRO_0000429464" description="Kunitz serine protease inhibitor Pr-mulgin 3">
    <location>
        <begin position="25"/>
        <end position="83"/>
    </location>
</feature>
<feature type="domain" description="BPTI/Kunitz inhibitor" evidence="3">
    <location>
        <begin position="31"/>
        <end position="81"/>
    </location>
</feature>
<feature type="site" description="Reactive bond for trypsin" evidence="1">
    <location>
        <begin position="41"/>
        <end position="42"/>
    </location>
</feature>
<feature type="disulfide bond" evidence="3">
    <location>
        <begin position="31"/>
        <end position="81"/>
    </location>
</feature>
<feature type="disulfide bond" evidence="3">
    <location>
        <begin position="40"/>
        <end position="64"/>
    </location>
</feature>
<feature type="disulfide bond" evidence="3">
    <location>
        <begin position="56"/>
        <end position="77"/>
    </location>
</feature>
<accession>E7FL13</accession>
<comment type="function">
    <text evidence="4">Serine protease inhibitor that acts against trypsin (EC(50)=10 nM, Ki=5nM), and plasmin (EC(50)=200 nM, Ki=100 nM).</text>
</comment>
<comment type="subcellular location">
    <subcellularLocation>
        <location evidence="1">Secreted</location>
    </subcellularLocation>
</comment>
<comment type="tissue specificity">
    <text>Expressed by the venom gland.</text>
</comment>
<comment type="miscellaneous">
    <text evidence="6">Negative results: does not inhibit serine proteases (chymotrypsin, elastase, kallikrein, and pepsin), cysteine protease (cathepsin G), and MMP (1, 3, 7, 8, 9, 10, 12, 13, and 14), as well as voltage-gated potassium channels (Shaker and rKv1.1/KCNA1).</text>
</comment>
<comment type="similarity">
    <text evidence="5">Belongs to the venom Kunitz-type family.</text>
</comment>
<protein>
    <recommendedName>
        <fullName>Kunitz serine protease inhibitor Pr-mulgin 3</fullName>
    </recommendedName>
</protein>
<keyword id="KW-1015">Disulfide bond</keyword>
<keyword id="KW-0646">Protease inhibitor</keyword>
<keyword id="KW-0964">Secreted</keyword>
<keyword id="KW-0722">Serine protease inhibitor</keyword>
<keyword id="KW-0732">Signal</keyword>
<keyword id="KW-0800">Toxin</keyword>
<evidence type="ECO:0000250" key="1"/>
<evidence type="ECO:0000255" key="2"/>
<evidence type="ECO:0000255" key="3">
    <source>
        <dbReference type="PROSITE-ProRule" id="PRU00031"/>
    </source>
</evidence>
<evidence type="ECO:0000269" key="4">
    <source>
    </source>
</evidence>
<evidence type="ECO:0000305" key="5"/>
<evidence type="ECO:0000305" key="6">
    <source>
    </source>
</evidence>